<sequence length="59" mass="6686">MEEVIVTQDRSSIGIIPMHKKTLIALGLKKKGQSKKHKMTPQLKGMLRQVGYLLKVEKV</sequence>
<proteinExistence type="inferred from homology"/>
<name>RL30_LEPBP</name>
<protein>
    <recommendedName>
        <fullName evidence="1">Large ribosomal subunit protein uL30</fullName>
    </recommendedName>
    <alternativeName>
        <fullName evidence="2">50S ribosomal protein L30</fullName>
    </alternativeName>
</protein>
<feature type="chain" id="PRO_1000144696" description="Large ribosomal subunit protein uL30">
    <location>
        <begin position="1"/>
        <end position="59"/>
    </location>
</feature>
<reference key="1">
    <citation type="journal article" date="2008" name="PLoS ONE">
        <title>Genome sequence of the saprophyte Leptospira biflexa provides insights into the evolution of Leptospira and the pathogenesis of leptospirosis.</title>
        <authorList>
            <person name="Picardeau M."/>
            <person name="Bulach D.M."/>
            <person name="Bouchier C."/>
            <person name="Zuerner R.L."/>
            <person name="Zidane N."/>
            <person name="Wilson P.J."/>
            <person name="Creno S."/>
            <person name="Kuczek E.S."/>
            <person name="Bommezzadri S."/>
            <person name="Davis J.C."/>
            <person name="McGrath A."/>
            <person name="Johnson M.J."/>
            <person name="Boursaux-Eude C."/>
            <person name="Seemann T."/>
            <person name="Rouy Z."/>
            <person name="Coppel R.L."/>
            <person name="Rood J.I."/>
            <person name="Lajus A."/>
            <person name="Davies J.K."/>
            <person name="Medigue C."/>
            <person name="Adler B."/>
        </authorList>
    </citation>
    <scope>NUCLEOTIDE SEQUENCE [LARGE SCALE GENOMIC DNA]</scope>
    <source>
        <strain>Patoc 1 / ATCC 23582 / Paris</strain>
    </source>
</reference>
<evidence type="ECO:0000255" key="1">
    <source>
        <dbReference type="HAMAP-Rule" id="MF_01371"/>
    </source>
</evidence>
<evidence type="ECO:0000305" key="2"/>
<dbReference type="EMBL" id="CP000786">
    <property type="protein sequence ID" value="ABZ98050.1"/>
    <property type="molecule type" value="Genomic_DNA"/>
</dbReference>
<dbReference type="RefSeq" id="WP_012388927.1">
    <property type="nucleotide sequence ID" value="NC_010602.1"/>
</dbReference>
<dbReference type="SMR" id="B0SSG0"/>
<dbReference type="STRING" id="456481.LEPBI_I1947"/>
<dbReference type="KEGG" id="lbi:LEPBI_I1947"/>
<dbReference type="HOGENOM" id="CLU_131047_1_1_12"/>
<dbReference type="BioCyc" id="LBIF456481:LEPBI_RS09620-MONOMER"/>
<dbReference type="Proteomes" id="UP000001847">
    <property type="component" value="Chromosome I"/>
</dbReference>
<dbReference type="GO" id="GO:0015934">
    <property type="term" value="C:large ribosomal subunit"/>
    <property type="evidence" value="ECO:0007669"/>
    <property type="project" value="InterPro"/>
</dbReference>
<dbReference type="GO" id="GO:0003735">
    <property type="term" value="F:structural constituent of ribosome"/>
    <property type="evidence" value="ECO:0007669"/>
    <property type="project" value="InterPro"/>
</dbReference>
<dbReference type="GO" id="GO:0006412">
    <property type="term" value="P:translation"/>
    <property type="evidence" value="ECO:0007669"/>
    <property type="project" value="UniProtKB-UniRule"/>
</dbReference>
<dbReference type="Gene3D" id="3.30.1390.20">
    <property type="entry name" value="Ribosomal protein L30, ferredoxin-like fold domain"/>
    <property type="match status" value="1"/>
</dbReference>
<dbReference type="HAMAP" id="MF_01371_B">
    <property type="entry name" value="Ribosomal_uL30_B"/>
    <property type="match status" value="1"/>
</dbReference>
<dbReference type="InterPro" id="IPR036919">
    <property type="entry name" value="Ribo_uL30_ferredoxin-like_sf"/>
</dbReference>
<dbReference type="InterPro" id="IPR005996">
    <property type="entry name" value="Ribosomal_uL30_bac-type"/>
</dbReference>
<dbReference type="InterPro" id="IPR016082">
    <property type="entry name" value="Ribosomal_uL30_ferredoxin-like"/>
</dbReference>
<dbReference type="NCBIfam" id="TIGR01308">
    <property type="entry name" value="rpmD_bact"/>
    <property type="match status" value="1"/>
</dbReference>
<dbReference type="Pfam" id="PF00327">
    <property type="entry name" value="Ribosomal_L30"/>
    <property type="match status" value="1"/>
</dbReference>
<dbReference type="PIRSF" id="PIRSF002211">
    <property type="entry name" value="Ribosomal_L30_bac-type"/>
    <property type="match status" value="1"/>
</dbReference>
<dbReference type="SUPFAM" id="SSF55129">
    <property type="entry name" value="Ribosomal protein L30p/L7e"/>
    <property type="match status" value="1"/>
</dbReference>
<keyword id="KW-1185">Reference proteome</keyword>
<keyword id="KW-0687">Ribonucleoprotein</keyword>
<keyword id="KW-0689">Ribosomal protein</keyword>
<gene>
    <name evidence="1" type="primary">rpmD</name>
    <name type="ordered locus">LEPBI_I1947</name>
</gene>
<accession>B0SSG0</accession>
<comment type="subunit">
    <text evidence="1">Part of the 50S ribosomal subunit.</text>
</comment>
<comment type="similarity">
    <text evidence="1">Belongs to the universal ribosomal protein uL30 family.</text>
</comment>
<organism>
    <name type="scientific">Leptospira biflexa serovar Patoc (strain Patoc 1 / ATCC 23582 / Paris)</name>
    <dbReference type="NCBI Taxonomy" id="456481"/>
    <lineage>
        <taxon>Bacteria</taxon>
        <taxon>Pseudomonadati</taxon>
        <taxon>Spirochaetota</taxon>
        <taxon>Spirochaetia</taxon>
        <taxon>Leptospirales</taxon>
        <taxon>Leptospiraceae</taxon>
        <taxon>Leptospira</taxon>
    </lineage>
</organism>